<name>CHBP_VIBFU</name>
<keyword id="KW-0119">Carbohydrate metabolism</keyword>
<keyword id="KW-0903">Direct protein sequencing</keyword>
<keyword id="KW-0328">Glycosyltransferase</keyword>
<keyword id="KW-0808">Transferase</keyword>
<evidence type="ECO:0000250" key="1">
    <source>
        <dbReference type="UniProtKB" id="Q76IQ9"/>
    </source>
</evidence>
<evidence type="ECO:0000269" key="2">
    <source>
    </source>
</evidence>
<evidence type="ECO:0000303" key="3">
    <source>
    </source>
</evidence>
<evidence type="ECO:0000305" key="4"/>
<feature type="chain" id="PRO_0000424108" description="N,N'-diacetylchitobiose phosphorylase">
    <location>
        <begin position="1"/>
        <end position="800"/>
    </location>
</feature>
<feature type="active site" description="Proton donor" evidence="1">
    <location>
        <position position="492"/>
    </location>
</feature>
<feature type="binding site" evidence="1">
    <location>
        <position position="333"/>
    </location>
    <ligand>
        <name>N-acetyl-alpha-D-glucosamine 1-phosphate</name>
        <dbReference type="ChEBI" id="CHEBI:57776"/>
    </ligand>
</feature>
<feature type="binding site" evidence="1">
    <location>
        <position position="343"/>
    </location>
    <ligand>
        <name>N-acetyl-alpha-D-glucosamine 1-phosphate</name>
        <dbReference type="ChEBI" id="CHEBI:57776"/>
    </ligand>
</feature>
<feature type="binding site" evidence="1">
    <location>
        <position position="349"/>
    </location>
    <ligand>
        <name>N-acetyl-alpha-D-glucosamine 1-phosphate</name>
        <dbReference type="ChEBI" id="CHEBI:57776"/>
    </ligand>
</feature>
<feature type="binding site" evidence="1">
    <location>
        <position position="350"/>
    </location>
    <ligand>
        <name>N-acetyl-alpha-D-glucosamine 1-phosphate</name>
        <dbReference type="ChEBI" id="CHEBI:57776"/>
    </ligand>
</feature>
<feature type="binding site" evidence="1">
    <location>
        <position position="490"/>
    </location>
    <ligand>
        <name>N-acetyl-alpha-D-glucosamine 1-phosphate</name>
        <dbReference type="ChEBI" id="CHEBI:57776"/>
    </ligand>
</feature>
<feature type="binding site" evidence="1">
    <location>
        <position position="492"/>
    </location>
    <ligand>
        <name>N-acetyl-alpha-D-glucosamine 1-phosphate</name>
        <dbReference type="ChEBI" id="CHEBI:57776"/>
    </ligand>
</feature>
<feature type="binding site" evidence="1">
    <location>
        <position position="492"/>
    </location>
    <ligand>
        <name>N-acetyl-D-glucosamine</name>
        <dbReference type="ChEBI" id="CHEBI:506227"/>
    </ligand>
</feature>
<feature type="binding site" evidence="1">
    <location>
        <position position="636"/>
    </location>
    <ligand>
        <name>N-acetyl-D-glucosamine</name>
        <dbReference type="ChEBI" id="CHEBI:506227"/>
    </ligand>
</feature>
<feature type="binding site" evidence="1">
    <location>
        <position position="637"/>
    </location>
    <ligand>
        <name>N-acetyl-alpha-D-glucosamine 1-phosphate</name>
        <dbReference type="ChEBI" id="CHEBI:57776"/>
    </ligand>
</feature>
<feature type="binding site" evidence="1">
    <location>
        <position position="637"/>
    </location>
    <ligand>
        <name>N-acetyl-D-glucosamine</name>
        <dbReference type="ChEBI" id="CHEBI:506227"/>
    </ligand>
</feature>
<feature type="binding site" evidence="1">
    <location>
        <position position="644"/>
    </location>
    <ligand>
        <name>N-acetyl-alpha-D-glucosamine 1-phosphate</name>
        <dbReference type="ChEBI" id="CHEBI:57776"/>
    </ligand>
</feature>
<feature type="binding site" evidence="1">
    <location>
        <position position="690"/>
    </location>
    <ligand>
        <name>N-acetyl-alpha-D-glucosamine 1-phosphate</name>
        <dbReference type="ChEBI" id="CHEBI:57776"/>
    </ligand>
</feature>
<feature type="binding site" evidence="1">
    <location>
        <position position="709"/>
    </location>
    <ligand>
        <name>N-acetyl-alpha-D-glucosamine 1-phosphate</name>
        <dbReference type="ChEBI" id="CHEBI:57776"/>
    </ligand>
</feature>
<feature type="binding site" evidence="1">
    <location>
        <position position="710"/>
    </location>
    <ligand>
        <name>N-acetyl-alpha-D-glucosamine 1-phosphate</name>
        <dbReference type="ChEBI" id="CHEBI:57776"/>
    </ligand>
</feature>
<organism>
    <name type="scientific">Vibrio furnissii</name>
    <dbReference type="NCBI Taxonomy" id="29494"/>
    <lineage>
        <taxon>Bacteria</taxon>
        <taxon>Pseudomonadati</taxon>
        <taxon>Pseudomonadota</taxon>
        <taxon>Gammaproteobacteria</taxon>
        <taxon>Vibrionales</taxon>
        <taxon>Vibrionaceae</taxon>
        <taxon>Vibrio</taxon>
    </lineage>
</organism>
<accession>Q9F8X1</accession>
<gene>
    <name evidence="3" type="primary">chbP</name>
</gene>
<comment type="function">
    <text evidence="2">Catalyzes the reversible phosphorolysis of chitobiose (N,N'-diacetylchitobiose or (GlcNAc)(2)) into N-acetyl-alpha-D-glucosamine 1-phosphate (GlcNAc-1-P) and N-acetyl-D-glucosamine (GlcNAc) with inversion of the anomeric configuration.</text>
</comment>
<comment type="catalytic activity">
    <reaction evidence="2">
        <text>N,N'-diacetylchitobiose + phosphate = N-acetyl-alpha-D-glucosamine 1-phosphate + N-acetyl-D-glucosamine</text>
        <dbReference type="Rhea" id="RHEA:32527"/>
        <dbReference type="ChEBI" id="CHEBI:28681"/>
        <dbReference type="ChEBI" id="CHEBI:43474"/>
        <dbReference type="ChEBI" id="CHEBI:57776"/>
        <dbReference type="ChEBI" id="CHEBI:506227"/>
        <dbReference type="EC" id="2.4.1.280"/>
    </reaction>
</comment>
<comment type="biophysicochemical properties">
    <kinetics>
        <KM evidence="2">0.58 mM for N,N'-diacetylchitobiose</KM>
        <KM evidence="2">0.51 mM for phosphate</KM>
        <Vmax evidence="2">4.6 nmol/min/ug enzyme with N,N'-diacetylchitobiose as substrate</Vmax>
        <Vmax evidence="2">4.8 nmol/min/ug enzyme with phosphate as substrate</Vmax>
    </kinetics>
    <phDependence>
        <text evidence="2">Optimum pH is 6.5-7.0.</text>
    </phDependence>
    <temperatureDependence>
        <text evidence="2">Optimum temperature is 20-37 degrees Celsius.</text>
    </temperatureDependence>
</comment>
<comment type="subunit">
    <text evidence="1">Homodimer.</text>
</comment>
<comment type="similarity">
    <text evidence="4">Belongs to the glycosyl hydrolase 94 family.</text>
</comment>
<reference key="1">
    <citation type="journal article" date="2000" name="J. Biol. Chem.">
        <title>Chitin catabolism in the marine bacterium Vibrio furnissii. Identification, molecular cloning, and characterization of A N, N'-diacetylchitobiose phosphorylase.</title>
        <authorList>
            <person name="Park J.K."/>
            <person name="Keyhani N.O."/>
            <person name="Roseman S."/>
        </authorList>
    </citation>
    <scope>NUCLEOTIDE SEQUENCE [GENOMIC DNA]</scope>
    <scope>PROTEIN SEQUENCE OF 1-10</scope>
    <scope>FUNCTION</scope>
    <scope>BIOPHYSICOCHEMICAL PROPERTIES</scope>
    <scope>CATALYTIC ACTIVITY</scope>
</reference>
<protein>
    <recommendedName>
        <fullName evidence="3">N,N'-diacetylchitobiose phosphorylase</fullName>
        <ecNumber evidence="2">2.4.1.280</ecNumber>
    </recommendedName>
    <alternativeName>
        <fullName>Chitobiose phosphorylase</fullName>
    </alternativeName>
</protein>
<proteinExistence type="evidence at protein level"/>
<sequence>MKYGYFDNDNREYVITRPDVPAPWTNYLGTEKFCTVISHNAGGYSFYHSPEYNRVTKFRPNFTQDRPGHYIYLRDDETGDFWSVSWQPVAKNLDDAHYEVRHGLSYSKFRCDYNGIVATKTLFVPKGEDAQVWDVEIENTSDQPRTISAFGYVEFSFSHIASDNQNHQMSLYSAGTEYNNGVLEYDLYYNTDDFLGFYYLTATFDADSYDGQRDAFLGMYRDEANPIAVANGRCSNSAQTCYNHCGALHKQFVLQPGEKVRFAVILGVGKGNGEKLRAKYQDLSQVDAAFAGIKQHWDERCAKFQVRSPNQGLDTMINAWTLYQAETCVVWSRFASFIEVGGRTGLGYRDTAQDAISVPHTNPAMTRKRLVDLLRGQVKAGYGLHLFDPDWFDPEKADVKPSKSPTVVPTPSDEDKIHGIKDTCSDDHLWIVPTILNFVKETGDLSFIDEVIPYADGGDATVYQHMMAALDFSAEYVGQTGICKGLRADWNDCLNLGGGESAMVSFLHFWALEAFLELARHRQDAAAIDKYQAMANGVREACETHLWDDNGGWYIRGLTKDGDKIGTFEQQEGKVHLESNTLAVLSGAVSQQRGEKAMDAVYEYLFSPYGLHLNAPSFATPNDDIGFVTRVYQGVKENGAIFSHPNPWAWVAEAKLGRGDRAMEFYDSLNPYNQNDIIETRVAEPYSYVQFIMGRDHQDHGRANHPWLTGTSGWAYYATTNFILGVRTGFDTLTVDPCIPAAWSGFEVTREWRGATYHISVQNPNGVSKGVQSILVNGEAVDAINAQPAGSENQVTVILG</sequence>
<dbReference type="EC" id="2.4.1.280" evidence="2"/>
<dbReference type="EMBL" id="AF230379">
    <property type="protein sequence ID" value="AAG23740.1"/>
    <property type="molecule type" value="Genomic_DNA"/>
</dbReference>
<dbReference type="SMR" id="Q9F8X1"/>
<dbReference type="CAZy" id="GH94">
    <property type="family name" value="Glycoside Hydrolase Family 94"/>
</dbReference>
<dbReference type="KEGG" id="ag:AAG23740"/>
<dbReference type="BioCyc" id="MetaCyc:MONOMER-16878"/>
<dbReference type="BRENDA" id="2.4.1.280">
    <property type="organism ID" value="6631"/>
</dbReference>
<dbReference type="GO" id="GO:0030246">
    <property type="term" value="F:carbohydrate binding"/>
    <property type="evidence" value="ECO:0007669"/>
    <property type="project" value="InterPro"/>
</dbReference>
<dbReference type="GO" id="GO:0016757">
    <property type="term" value="F:glycosyltransferase activity"/>
    <property type="evidence" value="ECO:0007669"/>
    <property type="project" value="UniProtKB-KW"/>
</dbReference>
<dbReference type="GO" id="GO:0005975">
    <property type="term" value="P:carbohydrate metabolic process"/>
    <property type="evidence" value="ECO:0007669"/>
    <property type="project" value="InterPro"/>
</dbReference>
<dbReference type="CDD" id="cd11755">
    <property type="entry name" value="GH94N_ChBP_like"/>
    <property type="match status" value="1"/>
</dbReference>
<dbReference type="FunFam" id="1.50.10.10:FF:000051">
    <property type="entry name" value="Cellobiose phosphorylase"/>
    <property type="match status" value="1"/>
</dbReference>
<dbReference type="FunFam" id="2.70.98.40:FF:000005">
    <property type="entry name" value="Cellobiose phosphorylase"/>
    <property type="match status" value="1"/>
</dbReference>
<dbReference type="Gene3D" id="1.50.10.10">
    <property type="match status" value="1"/>
</dbReference>
<dbReference type="Gene3D" id="2.70.98.40">
    <property type="entry name" value="Glycoside hydrolase, family 65, N-terminal domain"/>
    <property type="match status" value="1"/>
</dbReference>
<dbReference type="Gene3D" id="2.60.420.10">
    <property type="entry name" value="Maltose phosphorylase, domain 3"/>
    <property type="match status" value="1"/>
</dbReference>
<dbReference type="InterPro" id="IPR008928">
    <property type="entry name" value="6-hairpin_glycosidase_sf"/>
</dbReference>
<dbReference type="InterPro" id="IPR012341">
    <property type="entry name" value="6hp_glycosidase-like_sf"/>
</dbReference>
<dbReference type="InterPro" id="IPR009342">
    <property type="entry name" value="Carb-bd_put_dom"/>
</dbReference>
<dbReference type="InterPro" id="IPR011013">
    <property type="entry name" value="Gal_mutarotase_sf_dom"/>
</dbReference>
<dbReference type="InterPro" id="IPR033432">
    <property type="entry name" value="GH36_catalytic"/>
</dbReference>
<dbReference type="InterPro" id="IPR052047">
    <property type="entry name" value="GH94_Enzymes"/>
</dbReference>
<dbReference type="InterPro" id="IPR037828">
    <property type="entry name" value="GH94N_ChBP"/>
</dbReference>
<dbReference type="InterPro" id="IPR037018">
    <property type="entry name" value="Glyco_hydro_65_N_sf"/>
</dbReference>
<dbReference type="InterPro" id="IPR010383">
    <property type="entry name" value="Glyco_hydrolase_94"/>
</dbReference>
<dbReference type="PANTHER" id="PTHR37469">
    <property type="entry name" value="CELLOBIONIC ACID PHOSPHORYLASE-RELATED"/>
    <property type="match status" value="1"/>
</dbReference>
<dbReference type="PANTHER" id="PTHR37469:SF3">
    <property type="entry name" value="PUTATIVE-RELATED"/>
    <property type="match status" value="1"/>
</dbReference>
<dbReference type="Pfam" id="PF17167">
    <property type="entry name" value="Glyco_hydro_36"/>
    <property type="match status" value="1"/>
</dbReference>
<dbReference type="Pfam" id="PF06165">
    <property type="entry name" value="Glyco_transf_36"/>
    <property type="match status" value="1"/>
</dbReference>
<dbReference type="SMART" id="SM01068">
    <property type="entry name" value="CBM_X"/>
    <property type="match status" value="1"/>
</dbReference>
<dbReference type="SUPFAM" id="SSF74650">
    <property type="entry name" value="Galactose mutarotase-like"/>
    <property type="match status" value="1"/>
</dbReference>
<dbReference type="SUPFAM" id="SSF48208">
    <property type="entry name" value="Six-hairpin glycosidases"/>
    <property type="match status" value="1"/>
</dbReference>